<gene>
    <name evidence="1" type="primary">rpsB</name>
    <name type="ordered locus">NIS_1537</name>
</gene>
<feature type="chain" id="PRO_1000004009" description="Small ribosomal subunit protein uS2">
    <location>
        <begin position="1"/>
        <end position="267"/>
    </location>
</feature>
<feature type="region of interest" description="Disordered" evidence="2">
    <location>
        <begin position="225"/>
        <end position="267"/>
    </location>
</feature>
<feature type="compositionally biased region" description="Acidic residues" evidence="2">
    <location>
        <begin position="251"/>
        <end position="267"/>
    </location>
</feature>
<dbReference type="EMBL" id="AP009178">
    <property type="protein sequence ID" value="BAF70644.1"/>
    <property type="molecule type" value="Genomic_DNA"/>
</dbReference>
<dbReference type="RefSeq" id="WP_012082907.1">
    <property type="nucleotide sequence ID" value="NC_009662.1"/>
</dbReference>
<dbReference type="SMR" id="A6Q585"/>
<dbReference type="FunCoup" id="A6Q585">
    <property type="interactions" value="557"/>
</dbReference>
<dbReference type="STRING" id="387092.NIS_1537"/>
<dbReference type="KEGG" id="nis:NIS_1537"/>
<dbReference type="eggNOG" id="COG0052">
    <property type="taxonomic scope" value="Bacteria"/>
</dbReference>
<dbReference type="HOGENOM" id="CLU_040318_1_2_7"/>
<dbReference type="InParanoid" id="A6Q585"/>
<dbReference type="OrthoDB" id="9808036at2"/>
<dbReference type="Proteomes" id="UP000001118">
    <property type="component" value="Chromosome"/>
</dbReference>
<dbReference type="GO" id="GO:0022627">
    <property type="term" value="C:cytosolic small ribosomal subunit"/>
    <property type="evidence" value="ECO:0007669"/>
    <property type="project" value="TreeGrafter"/>
</dbReference>
<dbReference type="GO" id="GO:0003735">
    <property type="term" value="F:structural constituent of ribosome"/>
    <property type="evidence" value="ECO:0007669"/>
    <property type="project" value="InterPro"/>
</dbReference>
<dbReference type="GO" id="GO:0006412">
    <property type="term" value="P:translation"/>
    <property type="evidence" value="ECO:0007669"/>
    <property type="project" value="UniProtKB-UniRule"/>
</dbReference>
<dbReference type="CDD" id="cd01425">
    <property type="entry name" value="RPS2"/>
    <property type="match status" value="1"/>
</dbReference>
<dbReference type="FunFam" id="1.10.287.610:FF:000001">
    <property type="entry name" value="30S ribosomal protein S2"/>
    <property type="match status" value="1"/>
</dbReference>
<dbReference type="Gene3D" id="3.40.50.10490">
    <property type="entry name" value="Glucose-6-phosphate isomerase like protein, domain 1"/>
    <property type="match status" value="1"/>
</dbReference>
<dbReference type="Gene3D" id="1.10.287.610">
    <property type="entry name" value="Helix hairpin bin"/>
    <property type="match status" value="1"/>
</dbReference>
<dbReference type="HAMAP" id="MF_00291_B">
    <property type="entry name" value="Ribosomal_uS2_B"/>
    <property type="match status" value="1"/>
</dbReference>
<dbReference type="InterPro" id="IPR001865">
    <property type="entry name" value="Ribosomal_uS2"/>
</dbReference>
<dbReference type="InterPro" id="IPR005706">
    <property type="entry name" value="Ribosomal_uS2_bac/mit/plastid"/>
</dbReference>
<dbReference type="InterPro" id="IPR018130">
    <property type="entry name" value="Ribosomal_uS2_CS"/>
</dbReference>
<dbReference type="InterPro" id="IPR023591">
    <property type="entry name" value="Ribosomal_uS2_flav_dom_sf"/>
</dbReference>
<dbReference type="NCBIfam" id="TIGR01011">
    <property type="entry name" value="rpsB_bact"/>
    <property type="match status" value="1"/>
</dbReference>
<dbReference type="PANTHER" id="PTHR12534">
    <property type="entry name" value="30S RIBOSOMAL PROTEIN S2 PROKARYOTIC AND ORGANELLAR"/>
    <property type="match status" value="1"/>
</dbReference>
<dbReference type="PANTHER" id="PTHR12534:SF0">
    <property type="entry name" value="SMALL RIBOSOMAL SUBUNIT PROTEIN US2M"/>
    <property type="match status" value="1"/>
</dbReference>
<dbReference type="Pfam" id="PF00318">
    <property type="entry name" value="Ribosomal_S2"/>
    <property type="match status" value="1"/>
</dbReference>
<dbReference type="PRINTS" id="PR00395">
    <property type="entry name" value="RIBOSOMALS2"/>
</dbReference>
<dbReference type="SUPFAM" id="SSF52313">
    <property type="entry name" value="Ribosomal protein S2"/>
    <property type="match status" value="1"/>
</dbReference>
<dbReference type="PROSITE" id="PS00962">
    <property type="entry name" value="RIBOSOMAL_S2_1"/>
    <property type="match status" value="1"/>
</dbReference>
<dbReference type="PROSITE" id="PS00963">
    <property type="entry name" value="RIBOSOMAL_S2_2"/>
    <property type="match status" value="1"/>
</dbReference>
<organism>
    <name type="scientific">Nitratiruptor sp. (strain SB155-2)</name>
    <dbReference type="NCBI Taxonomy" id="387092"/>
    <lineage>
        <taxon>Bacteria</taxon>
        <taxon>Pseudomonadati</taxon>
        <taxon>Campylobacterota</taxon>
        <taxon>Epsilonproteobacteria</taxon>
        <taxon>Nautiliales</taxon>
        <taxon>Nitratiruptoraceae</taxon>
        <taxon>Nitratiruptor</taxon>
    </lineage>
</organism>
<comment type="similarity">
    <text evidence="1">Belongs to the universal ribosomal protein uS2 family.</text>
</comment>
<protein>
    <recommendedName>
        <fullName evidence="1">Small ribosomal subunit protein uS2</fullName>
    </recommendedName>
    <alternativeName>
        <fullName evidence="3">30S ribosomal protein S2</fullName>
    </alternativeName>
</protein>
<evidence type="ECO:0000255" key="1">
    <source>
        <dbReference type="HAMAP-Rule" id="MF_00291"/>
    </source>
</evidence>
<evidence type="ECO:0000256" key="2">
    <source>
        <dbReference type="SAM" id="MobiDB-lite"/>
    </source>
</evidence>
<evidence type="ECO:0000305" key="3"/>
<sequence length="267" mass="30689">MVTMKDLLECGVHFGHQTRRWNPKMKPFIFGVRKNIHIIDLQKTLRYFRYTYNIVRDAAKEGKTILFVGTKKQAKNAIEEYAKKCGMPYVNSRWLGGTLTNFNTIKKSIRKLEIIEEMEKTGQMDLLTKKEALMLRRKKEKLENFLGGIRDMKGLPDMLFIIDAVREHIAVKEGNKLGIPIVAPLDTNCDPDLIDYPIPGNDDAIRSIQLFCKEMAEAIIEGKELREQELEGEEQEEAAPATEEEKKELIEEAVAEGEAEETEEEEK</sequence>
<reference key="1">
    <citation type="journal article" date="2007" name="Proc. Natl. Acad. Sci. U.S.A.">
        <title>Deep-sea vent epsilon-proteobacterial genomes provide insights into emergence of pathogens.</title>
        <authorList>
            <person name="Nakagawa S."/>
            <person name="Takaki Y."/>
            <person name="Shimamura S."/>
            <person name="Reysenbach A.-L."/>
            <person name="Takai K."/>
            <person name="Horikoshi K."/>
        </authorList>
    </citation>
    <scope>NUCLEOTIDE SEQUENCE [LARGE SCALE GENOMIC DNA]</scope>
    <source>
        <strain>SB155-2</strain>
    </source>
</reference>
<accession>A6Q585</accession>
<keyword id="KW-1185">Reference proteome</keyword>
<keyword id="KW-0687">Ribonucleoprotein</keyword>
<keyword id="KW-0689">Ribosomal protein</keyword>
<proteinExistence type="inferred from homology"/>
<name>RS2_NITSB</name>